<proteinExistence type="evidence at transcript level"/>
<name>IACX1_WHEAT</name>
<evidence type="ECO:0000255" key="1"/>
<evidence type="ECO:0000305" key="2"/>
<comment type="subcellular location">
    <subcellularLocation>
        <location evidence="2">Secreted</location>
    </subcellularLocation>
</comment>
<comment type="similarity">
    <text evidence="2">Belongs to the protease inhibitor I6 (cereal trypsin/alpha-amylase inhibitor) family.</text>
</comment>
<dbReference type="EMBL" id="X75610">
    <property type="protein sequence ID" value="CAA53282.1"/>
    <property type="molecule type" value="mRNA"/>
</dbReference>
<dbReference type="EMBL" id="X75608">
    <property type="protein sequence ID" value="CAA53280.1"/>
    <property type="molecule type" value="mRNA"/>
</dbReference>
<dbReference type="PIR" id="S51810">
    <property type="entry name" value="S51810"/>
</dbReference>
<dbReference type="SMR" id="Q43723"/>
<dbReference type="STRING" id="4565.Q43723"/>
<dbReference type="Allergome" id="11042">
    <property type="allergen name" value="Tri a CMX"/>
</dbReference>
<dbReference type="Proteomes" id="UP000019116">
    <property type="component" value="Unplaced"/>
</dbReference>
<dbReference type="ExpressionAtlas" id="Q43723">
    <property type="expression patterns" value="baseline"/>
</dbReference>
<dbReference type="GO" id="GO:0005576">
    <property type="term" value="C:extracellular region"/>
    <property type="evidence" value="ECO:0007669"/>
    <property type="project" value="UniProtKB-SubCell"/>
</dbReference>
<dbReference type="GO" id="GO:0004867">
    <property type="term" value="F:serine-type endopeptidase inhibitor activity"/>
    <property type="evidence" value="ECO:0007669"/>
    <property type="project" value="UniProtKB-KW"/>
</dbReference>
<dbReference type="CDD" id="cd00261">
    <property type="entry name" value="AAI_SS"/>
    <property type="match status" value="1"/>
</dbReference>
<dbReference type="Gene3D" id="1.10.110.10">
    <property type="entry name" value="Plant lipid-transfer and hydrophobic proteins"/>
    <property type="match status" value="1"/>
</dbReference>
<dbReference type="InterPro" id="IPR036312">
    <property type="entry name" value="Bifun_inhib/LTP/seed_sf"/>
</dbReference>
<dbReference type="InterPro" id="IPR016140">
    <property type="entry name" value="Bifunc_inhib/LTP/seed_store"/>
</dbReference>
<dbReference type="PANTHER" id="PTHR34481">
    <property type="entry name" value="TRYPSIN/FACTOR XIIA INHIBITOR-RELATED"/>
    <property type="match status" value="1"/>
</dbReference>
<dbReference type="PANTHER" id="PTHR34481:SF15">
    <property type="entry name" value="TRYPSIN_ALPHA-AMYLASE INHIBITOR CMX1_CMX3"/>
    <property type="match status" value="1"/>
</dbReference>
<dbReference type="Pfam" id="PF00234">
    <property type="entry name" value="Tryp_alpha_amyl"/>
    <property type="match status" value="1"/>
</dbReference>
<dbReference type="SUPFAM" id="SSF47699">
    <property type="entry name" value="Bifunctional inhibitor/lipid-transfer protein/seed storage 2S albumin"/>
    <property type="match status" value="1"/>
</dbReference>
<feature type="signal peptide" evidence="1">
    <location>
        <begin position="1"/>
        <end position="24"/>
    </location>
</feature>
<feature type="chain" id="PRO_0000014348" description="Trypsin/alpha-amylase inhibitor CMX1/CMX3">
    <location>
        <begin position="25"/>
        <end position="121"/>
    </location>
</feature>
<organism>
    <name type="scientific">Triticum aestivum</name>
    <name type="common">Wheat</name>
    <dbReference type="NCBI Taxonomy" id="4565"/>
    <lineage>
        <taxon>Eukaryota</taxon>
        <taxon>Viridiplantae</taxon>
        <taxon>Streptophyta</taxon>
        <taxon>Embryophyta</taxon>
        <taxon>Tracheophyta</taxon>
        <taxon>Spermatophyta</taxon>
        <taxon>Magnoliopsida</taxon>
        <taxon>Liliopsida</taxon>
        <taxon>Poales</taxon>
        <taxon>Poaceae</taxon>
        <taxon>BOP clade</taxon>
        <taxon>Pooideae</taxon>
        <taxon>Triticodae</taxon>
        <taxon>Triticeae</taxon>
        <taxon>Triticinae</taxon>
        <taxon>Triticum</taxon>
    </lineage>
</organism>
<sequence>MAFKHQLILSTAILLAVLAAASASFREQCVPGREITYESLNARREYAVRQTCGYYLSAERQKRRCCDELSKVPELCWCEVLRILMDRRVTKEGVVKGSLLQDMSRCKKLTREFIAGIVGRE</sequence>
<protein>
    <recommendedName>
        <fullName>Trypsin/alpha-amylase inhibitor CMX1/CMX3</fullName>
    </recommendedName>
    <alternativeName>
        <fullName>ITRL-1/ITRL-3</fullName>
    </alternativeName>
</protein>
<reference key="1">
    <citation type="journal article" date="1994" name="Plant Mol. Biol.">
        <title>Sharp divergence between wheat and barley at loci encoding novel members of the trypsin/alpha-amylase inhibitors family.</title>
        <authorList>
            <person name="Sanchez de la Hoz P."/>
            <person name="Castagnaro A."/>
            <person name="Carbonero P."/>
        </authorList>
    </citation>
    <scope>NUCLEOTIDE SEQUENCE [MRNA]</scope>
    <source>
        <strain>cv. Chinese Spring</strain>
        <tissue>Endosperm</tissue>
    </source>
</reference>
<keyword id="KW-0646">Protease inhibitor</keyword>
<keyword id="KW-1185">Reference proteome</keyword>
<keyword id="KW-0964">Secreted</keyword>
<keyword id="KW-0722">Serine protease inhibitor</keyword>
<keyword id="KW-0732">Signal</keyword>
<accession>Q43723</accession>